<gene>
    <name type="primary">Moxd1</name>
    <name type="synonym">Dbhr</name>
    <name type="synonym">Mox</name>
</gene>
<name>MOXD1_MOUSE</name>
<dbReference type="EC" id="1.14.17.-"/>
<dbReference type="EMBL" id="AB041606">
    <property type="protein sequence ID" value="BAA95089.1"/>
    <property type="molecule type" value="mRNA"/>
</dbReference>
<dbReference type="EMBL" id="AK014340">
    <property type="protein sequence ID" value="BAB29283.1"/>
    <property type="molecule type" value="mRNA"/>
</dbReference>
<dbReference type="EMBL" id="AK030274">
    <property type="protein sequence ID" value="BAC26871.1"/>
    <property type="molecule type" value="mRNA"/>
</dbReference>
<dbReference type="EMBL" id="AK081586">
    <property type="protein sequence ID" value="BAC38265.1"/>
    <property type="status" value="ALT_FRAME"/>
    <property type="molecule type" value="mRNA"/>
</dbReference>
<dbReference type="EMBL" id="BC025892">
    <property type="protein sequence ID" value="AAH25892.1"/>
    <property type="molecule type" value="mRNA"/>
</dbReference>
<dbReference type="EMBL" id="BC057652">
    <property type="protein sequence ID" value="AAH57652.1"/>
    <property type="molecule type" value="mRNA"/>
</dbReference>
<dbReference type="CCDS" id="CCDS23750.1"/>
<dbReference type="RefSeq" id="NP_067484.2">
    <property type="nucleotide sequence ID" value="NM_021509.5"/>
</dbReference>
<dbReference type="SMR" id="Q9CXI3"/>
<dbReference type="FunCoup" id="Q9CXI3">
    <property type="interactions" value="99"/>
</dbReference>
<dbReference type="STRING" id="10090.ENSMUSP00000093460"/>
<dbReference type="GlyCosmos" id="Q9CXI3">
    <property type="glycosylation" value="4 sites, No reported glycans"/>
</dbReference>
<dbReference type="GlyGen" id="Q9CXI3">
    <property type="glycosylation" value="4 sites, 2 N-linked glycans (2 sites)"/>
</dbReference>
<dbReference type="PhosphoSitePlus" id="Q9CXI3"/>
<dbReference type="PaxDb" id="10090-ENSMUSP00000093460"/>
<dbReference type="PeptideAtlas" id="Q9CXI3"/>
<dbReference type="ProteomicsDB" id="295653"/>
<dbReference type="Antibodypedia" id="32922">
    <property type="antibodies" value="140 antibodies from 22 providers"/>
</dbReference>
<dbReference type="DNASU" id="59012"/>
<dbReference type="Ensembl" id="ENSMUST00000095784.3">
    <property type="protein sequence ID" value="ENSMUSP00000093460.3"/>
    <property type="gene ID" value="ENSMUSG00000020000.8"/>
</dbReference>
<dbReference type="GeneID" id="59012"/>
<dbReference type="KEGG" id="mmu:59012"/>
<dbReference type="UCSC" id="uc007equ.1">
    <property type="organism name" value="mouse"/>
</dbReference>
<dbReference type="AGR" id="MGI:1921582"/>
<dbReference type="CTD" id="26002"/>
<dbReference type="MGI" id="MGI:1921582">
    <property type="gene designation" value="Moxd1"/>
</dbReference>
<dbReference type="VEuPathDB" id="HostDB:ENSMUSG00000020000"/>
<dbReference type="eggNOG" id="KOG3568">
    <property type="taxonomic scope" value="Eukaryota"/>
</dbReference>
<dbReference type="GeneTree" id="ENSGT00530000063085"/>
<dbReference type="HOGENOM" id="CLU_017939_4_1_1"/>
<dbReference type="InParanoid" id="Q9CXI3"/>
<dbReference type="OMA" id="MITGKHM"/>
<dbReference type="OrthoDB" id="10003276at2759"/>
<dbReference type="PhylomeDB" id="Q9CXI3"/>
<dbReference type="TreeFam" id="TF320698"/>
<dbReference type="BioGRID-ORCS" id="59012">
    <property type="hits" value="4 hits in 79 CRISPR screens"/>
</dbReference>
<dbReference type="PRO" id="PR:Q9CXI3"/>
<dbReference type="Proteomes" id="UP000000589">
    <property type="component" value="Chromosome 10"/>
</dbReference>
<dbReference type="RNAct" id="Q9CXI3">
    <property type="molecule type" value="protein"/>
</dbReference>
<dbReference type="Bgee" id="ENSMUSG00000020000">
    <property type="expression patterns" value="Expressed in vas deferens and 153 other cell types or tissues"/>
</dbReference>
<dbReference type="GO" id="GO:0005789">
    <property type="term" value="C:endoplasmic reticulum membrane"/>
    <property type="evidence" value="ECO:0007669"/>
    <property type="project" value="UniProtKB-SubCell"/>
</dbReference>
<dbReference type="GO" id="GO:0005507">
    <property type="term" value="F:copper ion binding"/>
    <property type="evidence" value="ECO:0007669"/>
    <property type="project" value="InterPro"/>
</dbReference>
<dbReference type="GO" id="GO:0004500">
    <property type="term" value="F:dopamine beta-monooxygenase activity"/>
    <property type="evidence" value="ECO:0007669"/>
    <property type="project" value="InterPro"/>
</dbReference>
<dbReference type="CDD" id="cd09631">
    <property type="entry name" value="DOMON_DOH"/>
    <property type="match status" value="1"/>
</dbReference>
<dbReference type="FunFam" id="2.60.120.310:FF:000002">
    <property type="entry name" value="DBH-like monooxygenase protein 1"/>
    <property type="match status" value="1"/>
</dbReference>
<dbReference type="FunFam" id="2.60.120.230:FF:000001">
    <property type="entry name" value="Monooxygenase, DBH-like 1"/>
    <property type="match status" value="1"/>
</dbReference>
<dbReference type="Gene3D" id="2.60.120.230">
    <property type="match status" value="1"/>
</dbReference>
<dbReference type="Gene3D" id="2.60.120.310">
    <property type="entry name" value="Copper type II, ascorbate-dependent monooxygenase, N-terminal domain"/>
    <property type="match status" value="1"/>
</dbReference>
<dbReference type="InterPro" id="IPR014784">
    <property type="entry name" value="Cu2_ascorb_mOase-like_C"/>
</dbReference>
<dbReference type="InterPro" id="IPR000323">
    <property type="entry name" value="Cu2_ascorb_mOase_N"/>
</dbReference>
<dbReference type="InterPro" id="IPR036939">
    <property type="entry name" value="Cu2_ascorb_mOase_N_sf"/>
</dbReference>
<dbReference type="InterPro" id="IPR024548">
    <property type="entry name" value="Cu2_monoox_C"/>
</dbReference>
<dbReference type="InterPro" id="IPR000945">
    <property type="entry name" value="DBH-like"/>
</dbReference>
<dbReference type="InterPro" id="IPR045266">
    <property type="entry name" value="DOH_DOMON"/>
</dbReference>
<dbReference type="InterPro" id="IPR005018">
    <property type="entry name" value="DOMON_domain"/>
</dbReference>
<dbReference type="InterPro" id="IPR008977">
    <property type="entry name" value="PHM/PNGase_F_dom_sf"/>
</dbReference>
<dbReference type="InterPro" id="IPR028460">
    <property type="entry name" value="Tbh/DBH"/>
</dbReference>
<dbReference type="PANTHER" id="PTHR10157:SF28">
    <property type="entry name" value="DBH-LIKE MONOOXYGENASE PROTEIN 1"/>
    <property type="match status" value="1"/>
</dbReference>
<dbReference type="PANTHER" id="PTHR10157">
    <property type="entry name" value="DOPAMINE BETA HYDROXYLASE RELATED"/>
    <property type="match status" value="1"/>
</dbReference>
<dbReference type="Pfam" id="PF03712">
    <property type="entry name" value="Cu2_monoox_C"/>
    <property type="match status" value="1"/>
</dbReference>
<dbReference type="Pfam" id="PF01082">
    <property type="entry name" value="Cu2_monooxygen"/>
    <property type="match status" value="1"/>
</dbReference>
<dbReference type="Pfam" id="PF03351">
    <property type="entry name" value="DOMON"/>
    <property type="match status" value="1"/>
</dbReference>
<dbReference type="PRINTS" id="PR00767">
    <property type="entry name" value="DBMONOXGNASE"/>
</dbReference>
<dbReference type="SMART" id="SM00664">
    <property type="entry name" value="DoH"/>
    <property type="match status" value="1"/>
</dbReference>
<dbReference type="SUPFAM" id="SSF49742">
    <property type="entry name" value="PHM/PNGase F"/>
    <property type="match status" value="2"/>
</dbReference>
<dbReference type="PROSITE" id="PS50836">
    <property type="entry name" value="DOMON"/>
    <property type="match status" value="1"/>
</dbReference>
<keyword id="KW-0186">Copper</keyword>
<keyword id="KW-1015">Disulfide bond</keyword>
<keyword id="KW-0256">Endoplasmic reticulum</keyword>
<keyword id="KW-0325">Glycoprotein</keyword>
<keyword id="KW-0472">Membrane</keyword>
<keyword id="KW-0479">Metal-binding</keyword>
<keyword id="KW-0503">Monooxygenase</keyword>
<keyword id="KW-0560">Oxidoreductase</keyword>
<keyword id="KW-1185">Reference proteome</keyword>
<keyword id="KW-0732">Signal</keyword>
<keyword id="KW-0812">Transmembrane</keyword>
<keyword id="KW-1133">Transmembrane helix</keyword>
<proteinExistence type="evidence at protein level"/>
<reference key="1">
    <citation type="journal article" date="2005" name="Science">
        <title>The transcriptional landscape of the mammalian genome.</title>
        <authorList>
            <person name="Carninci P."/>
            <person name="Kasukawa T."/>
            <person name="Katayama S."/>
            <person name="Gough J."/>
            <person name="Frith M.C."/>
            <person name="Maeda N."/>
            <person name="Oyama R."/>
            <person name="Ravasi T."/>
            <person name="Lenhard B."/>
            <person name="Wells C."/>
            <person name="Kodzius R."/>
            <person name="Shimokawa K."/>
            <person name="Bajic V.B."/>
            <person name="Brenner S.E."/>
            <person name="Batalov S."/>
            <person name="Forrest A.R."/>
            <person name="Zavolan M."/>
            <person name="Davis M.J."/>
            <person name="Wilming L.G."/>
            <person name="Aidinis V."/>
            <person name="Allen J.E."/>
            <person name="Ambesi-Impiombato A."/>
            <person name="Apweiler R."/>
            <person name="Aturaliya R.N."/>
            <person name="Bailey T.L."/>
            <person name="Bansal M."/>
            <person name="Baxter L."/>
            <person name="Beisel K.W."/>
            <person name="Bersano T."/>
            <person name="Bono H."/>
            <person name="Chalk A.M."/>
            <person name="Chiu K.P."/>
            <person name="Choudhary V."/>
            <person name="Christoffels A."/>
            <person name="Clutterbuck D.R."/>
            <person name="Crowe M.L."/>
            <person name="Dalla E."/>
            <person name="Dalrymple B.P."/>
            <person name="de Bono B."/>
            <person name="Della Gatta G."/>
            <person name="di Bernardo D."/>
            <person name="Down T."/>
            <person name="Engstrom P."/>
            <person name="Fagiolini M."/>
            <person name="Faulkner G."/>
            <person name="Fletcher C.F."/>
            <person name="Fukushima T."/>
            <person name="Furuno M."/>
            <person name="Futaki S."/>
            <person name="Gariboldi M."/>
            <person name="Georgii-Hemming P."/>
            <person name="Gingeras T.R."/>
            <person name="Gojobori T."/>
            <person name="Green R.E."/>
            <person name="Gustincich S."/>
            <person name="Harbers M."/>
            <person name="Hayashi Y."/>
            <person name="Hensch T.K."/>
            <person name="Hirokawa N."/>
            <person name="Hill D."/>
            <person name="Huminiecki L."/>
            <person name="Iacono M."/>
            <person name="Ikeo K."/>
            <person name="Iwama A."/>
            <person name="Ishikawa T."/>
            <person name="Jakt M."/>
            <person name="Kanapin A."/>
            <person name="Katoh M."/>
            <person name="Kawasawa Y."/>
            <person name="Kelso J."/>
            <person name="Kitamura H."/>
            <person name="Kitano H."/>
            <person name="Kollias G."/>
            <person name="Krishnan S.P."/>
            <person name="Kruger A."/>
            <person name="Kummerfeld S.K."/>
            <person name="Kurochkin I.V."/>
            <person name="Lareau L.F."/>
            <person name="Lazarevic D."/>
            <person name="Lipovich L."/>
            <person name="Liu J."/>
            <person name="Liuni S."/>
            <person name="McWilliam S."/>
            <person name="Madan Babu M."/>
            <person name="Madera M."/>
            <person name="Marchionni L."/>
            <person name="Matsuda H."/>
            <person name="Matsuzawa S."/>
            <person name="Miki H."/>
            <person name="Mignone F."/>
            <person name="Miyake S."/>
            <person name="Morris K."/>
            <person name="Mottagui-Tabar S."/>
            <person name="Mulder N."/>
            <person name="Nakano N."/>
            <person name="Nakauchi H."/>
            <person name="Ng P."/>
            <person name="Nilsson R."/>
            <person name="Nishiguchi S."/>
            <person name="Nishikawa S."/>
            <person name="Nori F."/>
            <person name="Ohara O."/>
            <person name="Okazaki Y."/>
            <person name="Orlando V."/>
            <person name="Pang K.C."/>
            <person name="Pavan W.J."/>
            <person name="Pavesi G."/>
            <person name="Pesole G."/>
            <person name="Petrovsky N."/>
            <person name="Piazza S."/>
            <person name="Reed J."/>
            <person name="Reid J.F."/>
            <person name="Ring B.Z."/>
            <person name="Ringwald M."/>
            <person name="Rost B."/>
            <person name="Ruan Y."/>
            <person name="Salzberg S.L."/>
            <person name="Sandelin A."/>
            <person name="Schneider C."/>
            <person name="Schoenbach C."/>
            <person name="Sekiguchi K."/>
            <person name="Semple C.A."/>
            <person name="Seno S."/>
            <person name="Sessa L."/>
            <person name="Sheng Y."/>
            <person name="Shibata Y."/>
            <person name="Shimada H."/>
            <person name="Shimada K."/>
            <person name="Silva D."/>
            <person name="Sinclair B."/>
            <person name="Sperling S."/>
            <person name="Stupka E."/>
            <person name="Sugiura K."/>
            <person name="Sultana R."/>
            <person name="Takenaka Y."/>
            <person name="Taki K."/>
            <person name="Tammoja K."/>
            <person name="Tan S.L."/>
            <person name="Tang S."/>
            <person name="Taylor M.S."/>
            <person name="Tegner J."/>
            <person name="Teichmann S.A."/>
            <person name="Ueda H.R."/>
            <person name="van Nimwegen E."/>
            <person name="Verardo R."/>
            <person name="Wei C.L."/>
            <person name="Yagi K."/>
            <person name="Yamanishi H."/>
            <person name="Zabarovsky E."/>
            <person name="Zhu S."/>
            <person name="Zimmer A."/>
            <person name="Hide W."/>
            <person name="Bult C."/>
            <person name="Grimmond S.M."/>
            <person name="Teasdale R.D."/>
            <person name="Liu E.T."/>
            <person name="Brusic V."/>
            <person name="Quackenbush J."/>
            <person name="Wahlestedt C."/>
            <person name="Mattick J.S."/>
            <person name="Hume D.A."/>
            <person name="Kai C."/>
            <person name="Sasaki D."/>
            <person name="Tomaru Y."/>
            <person name="Fukuda S."/>
            <person name="Kanamori-Katayama M."/>
            <person name="Suzuki M."/>
            <person name="Aoki J."/>
            <person name="Arakawa T."/>
            <person name="Iida J."/>
            <person name="Imamura K."/>
            <person name="Itoh M."/>
            <person name="Kato T."/>
            <person name="Kawaji H."/>
            <person name="Kawagashira N."/>
            <person name="Kawashima T."/>
            <person name="Kojima M."/>
            <person name="Kondo S."/>
            <person name="Konno H."/>
            <person name="Nakano K."/>
            <person name="Ninomiya N."/>
            <person name="Nishio T."/>
            <person name="Okada M."/>
            <person name="Plessy C."/>
            <person name="Shibata K."/>
            <person name="Shiraki T."/>
            <person name="Suzuki S."/>
            <person name="Tagami M."/>
            <person name="Waki K."/>
            <person name="Watahiki A."/>
            <person name="Okamura-Oho Y."/>
            <person name="Suzuki H."/>
            <person name="Kawai J."/>
            <person name="Hayashizaki Y."/>
        </authorList>
    </citation>
    <scope>NUCLEOTIDE SEQUENCE [LARGE SCALE MRNA]</scope>
    <source>
        <strain>C57BL/6J</strain>
        <tissue>Head</tissue>
        <tissue>Ovary</tissue>
        <tissue>Uterus</tissue>
    </source>
</reference>
<reference key="2">
    <citation type="journal article" date="2004" name="Genome Res.">
        <title>The status, quality, and expansion of the NIH full-length cDNA project: the Mammalian Gene Collection (MGC).</title>
        <authorList>
            <consortium name="The MGC Project Team"/>
        </authorList>
    </citation>
    <scope>NUCLEOTIDE SEQUENCE [LARGE SCALE MRNA]</scope>
    <source>
        <strain>Czech II</strain>
        <tissue>Mammary tumor</tissue>
    </source>
</reference>
<reference key="3">
    <citation type="journal article" date="2001" name="Dev. Biol.">
        <title>DBHR, a gene with homology to dopamine beta-hydroxylase, is expressed in the neural crest throughout early development.</title>
        <authorList>
            <person name="Knecht A.K."/>
            <person name="Bronner-Fraser M."/>
        </authorList>
    </citation>
    <scope>IDENTIFICATION</scope>
    <source>
        <tissue>Embryo</tissue>
    </source>
</reference>
<reference key="4">
    <citation type="journal article" date="2004" name="J. Biol. Chem.">
        <title>Monooxygenase X, a member of the copper-dependent monooxygenase family localized to the endoplasmic reticulum.</title>
        <authorList>
            <person name="Xin X."/>
            <person name="Mains R.E."/>
            <person name="Eipper B.A."/>
        </authorList>
    </citation>
    <scope>IDENTIFICATION</scope>
    <scope>TISSUE SPECIFICITY</scope>
    <scope>GLYCOSYLATION</scope>
    <scope>SUBCELLULAR LOCATION</scope>
</reference>
<sequence length="613" mass="69678">MCGWPLLVLWALLPATAAGSPGRSYPHRVVLDPEGKYWLHWGRQGERLAFRLEVRTNGYVGFGFSPTGSMAAADIVVGGVAHGRPYLQDYFTNADRELEKDAQQDYHLDYAMENSTHTVIEFSRELHTCDVNDKSLTDSTVRVIWAYHHDDPGESGPKYHDLNRGTRSLRLLNPEKANVVSTVLPYFDLVNQNVPIPNKGTTYWCQMFKIPTFQEKHHVIKVEPIIERGHENLVHHILVYQCSSNFNDSVLDFGHECYHPNMPDAFLTCETVILAWGIGGEGFTYPPHVGLSLGMPLDPRYVLLEVHYDNPARRKGLIDSSGLRVFHTTDIRRYDAGVIEAGLWVSLFHTIPPGMPEFHSEGHCTLECLEEALGAEKPSGIHVFAVLLHAHLAGKGIRLRHFRKGEEMKLLAYDDDYDFNFQEFQYLREEQTILPGDNLITECRYNTKDRAVMTWGGLSTRNEMCLSYLLYYPRVNLTRCSSIPDIMEQLQFIGVKEIYRPVTTWPFIIKSPKQYRNLSFMDAMNKFKWTKKEGLSFNKLVLSLPVNVRCSKTDNAEWSIQGMTAIPPDIKRPYEAEPLVCEKAASPPLHGIFSLRLLTCALLLGSMLSSQGL</sequence>
<organism>
    <name type="scientific">Mus musculus</name>
    <name type="common">Mouse</name>
    <dbReference type="NCBI Taxonomy" id="10090"/>
    <lineage>
        <taxon>Eukaryota</taxon>
        <taxon>Metazoa</taxon>
        <taxon>Chordata</taxon>
        <taxon>Craniata</taxon>
        <taxon>Vertebrata</taxon>
        <taxon>Euteleostomi</taxon>
        <taxon>Mammalia</taxon>
        <taxon>Eutheria</taxon>
        <taxon>Euarchontoglires</taxon>
        <taxon>Glires</taxon>
        <taxon>Rodentia</taxon>
        <taxon>Myomorpha</taxon>
        <taxon>Muroidea</taxon>
        <taxon>Muridae</taxon>
        <taxon>Murinae</taxon>
        <taxon>Mus</taxon>
        <taxon>Mus</taxon>
    </lineage>
</organism>
<feature type="signal peptide" evidence="2">
    <location>
        <begin position="1"/>
        <end position="19"/>
    </location>
</feature>
<feature type="chain" id="PRO_0000305218" description="DBH-like monooxygenase protein 1">
    <location>
        <begin position="20"/>
        <end position="613"/>
    </location>
</feature>
<feature type="topological domain" description="Lumenal" evidence="2">
    <location>
        <begin position="20"/>
        <end position="587"/>
    </location>
</feature>
<feature type="transmembrane region" description="Helical" evidence="2">
    <location>
        <begin position="588"/>
        <end position="608"/>
    </location>
</feature>
<feature type="domain" description="DOMON" evidence="3">
    <location>
        <begin position="35"/>
        <end position="148"/>
    </location>
</feature>
<feature type="active site" evidence="2">
    <location>
        <position position="203"/>
    </location>
</feature>
<feature type="active site" evidence="2">
    <location>
        <position position="389"/>
    </location>
</feature>
<feature type="binding site" evidence="1">
    <location>
        <position position="235"/>
    </location>
    <ligand>
        <name>Cu cation</name>
        <dbReference type="ChEBI" id="CHEBI:23378"/>
        <label>A</label>
    </ligand>
</feature>
<feature type="binding site" evidence="1">
    <location>
        <position position="236"/>
    </location>
    <ligand>
        <name>Cu cation</name>
        <dbReference type="ChEBI" id="CHEBI:23378"/>
        <label>A</label>
    </ligand>
</feature>
<feature type="binding site" evidence="1">
    <location>
        <position position="307"/>
    </location>
    <ligand>
        <name>Cu cation</name>
        <dbReference type="ChEBI" id="CHEBI:23378"/>
        <label>A</label>
    </ligand>
</feature>
<feature type="binding site" evidence="1">
    <location>
        <position position="389"/>
    </location>
    <ligand>
        <name>Cu cation</name>
        <dbReference type="ChEBI" id="CHEBI:23378"/>
        <label>B</label>
    </ligand>
</feature>
<feature type="binding site" evidence="1">
    <location>
        <position position="391"/>
    </location>
    <ligand>
        <name>Cu cation</name>
        <dbReference type="ChEBI" id="CHEBI:23378"/>
        <label>B</label>
    </ligand>
</feature>
<feature type="binding site" evidence="1">
    <location>
        <position position="464"/>
    </location>
    <ligand>
        <name>Cu cation</name>
        <dbReference type="ChEBI" id="CHEBI:23378"/>
        <label>B</label>
    </ligand>
</feature>
<feature type="glycosylation site" description="N-linked (GlcNAc...) asparagine" evidence="2">
    <location>
        <position position="114"/>
    </location>
</feature>
<feature type="glycosylation site" description="N-linked (GlcNAc...) asparagine" evidence="2">
    <location>
        <position position="247"/>
    </location>
</feature>
<feature type="glycosylation site" description="N-linked (GlcNAc...) asparagine" evidence="2">
    <location>
        <position position="476"/>
    </location>
</feature>
<feature type="glycosylation site" description="N-linked (GlcNAc...) asparagine" evidence="2">
    <location>
        <position position="517"/>
    </location>
</feature>
<feature type="disulfide bond" evidence="1">
    <location>
        <begin position="205"/>
        <end position="257"/>
    </location>
</feature>
<feature type="disulfide bond" evidence="1">
    <location>
        <begin position="242"/>
        <end position="269"/>
    </location>
</feature>
<feature type="disulfide bond" evidence="1">
    <location>
        <begin position="364"/>
        <end position="480"/>
    </location>
</feature>
<feature type="disulfide bond" evidence="1">
    <location>
        <begin position="368"/>
        <end position="550"/>
    </location>
</feature>
<feature type="disulfide bond" evidence="1">
    <location>
        <begin position="443"/>
        <end position="465"/>
    </location>
</feature>
<feature type="sequence conflict" description="In Ref. 2; AAH57652." evidence="5" ref="2">
    <original>A</original>
    <variation>V</variation>
    <location>
        <position position="11"/>
    </location>
</feature>
<feature type="sequence conflict" description="In Ref. 2; AAH25892/AAH57652." evidence="5" ref="2">
    <original>V</original>
    <variation>A</variation>
    <location>
        <position position="131"/>
    </location>
</feature>
<feature type="sequence conflict" description="In Ref. 1; BAA95089." evidence="5" ref="1">
    <original>D</original>
    <variation>V</variation>
    <location>
        <position position="133"/>
    </location>
</feature>
<feature type="sequence conflict" description="In Ref. 2; AAH25892/AAH57652." evidence="5" ref="2">
    <original>P</original>
    <variation>L</variation>
    <location>
        <position position="185"/>
    </location>
</feature>
<feature type="sequence conflict" description="In Ref. 1; BAC38265." evidence="5" ref="1">
    <original>K</original>
    <variation>R</variation>
    <location>
        <position position="513"/>
    </location>
</feature>
<feature type="sequence conflict" description="In Ref. 2; AAH25892/AAH57652." evidence="5" ref="2">
    <original>S</original>
    <variation>N</variation>
    <location>
        <position position="609"/>
    </location>
</feature>
<feature type="sequence conflict" description="In Ref. 2; AAH25892/AAH57652." evidence="5" ref="2">
    <original>G</original>
    <variation>D</variation>
    <location>
        <position position="612"/>
    </location>
</feature>
<accession>Q9CXI3</accession>
<accession>Q6PFA8</accession>
<accession>Q8BUZ7</accession>
<accession>Q8R394</accession>
<accession>Q9JJA6</accession>
<comment type="cofactor">
    <cofactor evidence="1">
        <name>Cu(2+)</name>
        <dbReference type="ChEBI" id="CHEBI:29036"/>
    </cofactor>
    <text evidence="1">Binds 2 copper ions per subunit.</text>
</comment>
<comment type="subcellular location">
    <subcellularLocation>
        <location evidence="4">Endoplasmic reticulum membrane</location>
        <topology evidence="4">Single-pass type I membrane protein</topology>
    </subcellularLocation>
</comment>
<comment type="tissue specificity">
    <text evidence="4">Broadly exprressed, with highest levels in salivary gland and ovary.</text>
</comment>
<comment type="PTM">
    <text evidence="4">N-glycosylated.</text>
</comment>
<comment type="similarity">
    <text evidence="5">Belongs to the copper type II ascorbate-dependent monooxygenase family.</text>
</comment>
<comment type="sequence caution" evidence="5">
    <conflict type="frameshift">
        <sequence resource="EMBL-CDS" id="BAC38265"/>
    </conflict>
</comment>
<evidence type="ECO:0000250" key="1"/>
<evidence type="ECO:0000255" key="2"/>
<evidence type="ECO:0000255" key="3">
    <source>
        <dbReference type="PROSITE-ProRule" id="PRU00246"/>
    </source>
</evidence>
<evidence type="ECO:0000269" key="4">
    <source>
    </source>
</evidence>
<evidence type="ECO:0000305" key="5"/>
<protein>
    <recommendedName>
        <fullName>DBH-like monooxygenase protein 1</fullName>
        <ecNumber>1.14.17.-</ecNumber>
    </recommendedName>
    <alternativeName>
        <fullName>DBH-related protein</fullName>
    </alternativeName>
    <alternativeName>
        <fullName>Monooxygenase X</fullName>
    </alternativeName>
</protein>